<feature type="chain" id="PRO_0000231390" description="S-adenosylmethionine:tRNA ribosyltransferase-isomerase">
    <location>
        <begin position="1"/>
        <end position="350"/>
    </location>
</feature>
<dbReference type="EC" id="2.4.99.17" evidence="1"/>
<dbReference type="EMBL" id="CP000020">
    <property type="protein sequence ID" value="AAW86465.1"/>
    <property type="molecule type" value="Genomic_DNA"/>
</dbReference>
<dbReference type="RefSeq" id="WP_011262439.1">
    <property type="nucleotide sequence ID" value="NZ_CAWLES010000001.1"/>
</dbReference>
<dbReference type="RefSeq" id="YP_205353.1">
    <property type="nucleotide sequence ID" value="NC_006840.2"/>
</dbReference>
<dbReference type="SMR" id="Q5E3D1"/>
<dbReference type="STRING" id="312309.VF_1970"/>
<dbReference type="EnsemblBacteria" id="AAW86465">
    <property type="protein sequence ID" value="AAW86465"/>
    <property type="gene ID" value="VF_1970"/>
</dbReference>
<dbReference type="GeneID" id="54164666"/>
<dbReference type="KEGG" id="vfi:VF_1970"/>
<dbReference type="PATRIC" id="fig|312309.11.peg.1997"/>
<dbReference type="eggNOG" id="COG0809">
    <property type="taxonomic scope" value="Bacteria"/>
</dbReference>
<dbReference type="HOGENOM" id="CLU_039110_1_0_6"/>
<dbReference type="OrthoDB" id="9805933at2"/>
<dbReference type="UniPathway" id="UPA00392"/>
<dbReference type="Proteomes" id="UP000000537">
    <property type="component" value="Chromosome I"/>
</dbReference>
<dbReference type="GO" id="GO:0005737">
    <property type="term" value="C:cytoplasm"/>
    <property type="evidence" value="ECO:0007669"/>
    <property type="project" value="UniProtKB-SubCell"/>
</dbReference>
<dbReference type="GO" id="GO:0051075">
    <property type="term" value="F:S-adenosylmethionine:tRNA ribosyltransferase-isomerase activity"/>
    <property type="evidence" value="ECO:0007669"/>
    <property type="project" value="UniProtKB-EC"/>
</dbReference>
<dbReference type="GO" id="GO:0008616">
    <property type="term" value="P:queuosine biosynthetic process"/>
    <property type="evidence" value="ECO:0007669"/>
    <property type="project" value="UniProtKB-UniRule"/>
</dbReference>
<dbReference type="GO" id="GO:0002099">
    <property type="term" value="P:tRNA wobble guanine modification"/>
    <property type="evidence" value="ECO:0007669"/>
    <property type="project" value="TreeGrafter"/>
</dbReference>
<dbReference type="FunFam" id="2.40.10.240:FF:000001">
    <property type="entry name" value="S-adenosylmethionine:tRNA ribosyltransferase-isomerase"/>
    <property type="match status" value="1"/>
</dbReference>
<dbReference type="FunFam" id="3.40.1780.10:FF:000001">
    <property type="entry name" value="S-adenosylmethionine:tRNA ribosyltransferase-isomerase"/>
    <property type="match status" value="1"/>
</dbReference>
<dbReference type="Gene3D" id="2.40.10.240">
    <property type="entry name" value="QueA-like"/>
    <property type="match status" value="1"/>
</dbReference>
<dbReference type="Gene3D" id="3.40.1780.10">
    <property type="entry name" value="QueA-like"/>
    <property type="match status" value="1"/>
</dbReference>
<dbReference type="HAMAP" id="MF_00113">
    <property type="entry name" value="QueA"/>
    <property type="match status" value="1"/>
</dbReference>
<dbReference type="InterPro" id="IPR003699">
    <property type="entry name" value="QueA"/>
</dbReference>
<dbReference type="InterPro" id="IPR042118">
    <property type="entry name" value="QueA_dom1"/>
</dbReference>
<dbReference type="InterPro" id="IPR042119">
    <property type="entry name" value="QueA_dom2"/>
</dbReference>
<dbReference type="InterPro" id="IPR036100">
    <property type="entry name" value="QueA_sf"/>
</dbReference>
<dbReference type="NCBIfam" id="NF001140">
    <property type="entry name" value="PRK00147.1"/>
    <property type="match status" value="1"/>
</dbReference>
<dbReference type="NCBIfam" id="TIGR00113">
    <property type="entry name" value="queA"/>
    <property type="match status" value="1"/>
</dbReference>
<dbReference type="PANTHER" id="PTHR30307">
    <property type="entry name" value="S-ADENOSYLMETHIONINE:TRNA RIBOSYLTRANSFERASE-ISOMERASE"/>
    <property type="match status" value="1"/>
</dbReference>
<dbReference type="PANTHER" id="PTHR30307:SF0">
    <property type="entry name" value="S-ADENOSYLMETHIONINE:TRNA RIBOSYLTRANSFERASE-ISOMERASE"/>
    <property type="match status" value="1"/>
</dbReference>
<dbReference type="Pfam" id="PF02547">
    <property type="entry name" value="Queuosine_synth"/>
    <property type="match status" value="1"/>
</dbReference>
<dbReference type="SUPFAM" id="SSF111337">
    <property type="entry name" value="QueA-like"/>
    <property type="match status" value="1"/>
</dbReference>
<gene>
    <name evidence="1" type="primary">queA</name>
    <name type="ordered locus">VF_1970</name>
</gene>
<organism>
    <name type="scientific">Aliivibrio fischeri (strain ATCC 700601 / ES114)</name>
    <name type="common">Vibrio fischeri</name>
    <dbReference type="NCBI Taxonomy" id="312309"/>
    <lineage>
        <taxon>Bacteria</taxon>
        <taxon>Pseudomonadati</taxon>
        <taxon>Pseudomonadota</taxon>
        <taxon>Gammaproteobacteria</taxon>
        <taxon>Vibrionales</taxon>
        <taxon>Vibrionaceae</taxon>
        <taxon>Aliivibrio</taxon>
    </lineage>
</organism>
<name>QUEA_ALIF1</name>
<reference key="1">
    <citation type="journal article" date="2005" name="Proc. Natl. Acad. Sci. U.S.A.">
        <title>Complete genome sequence of Vibrio fischeri: a symbiotic bacterium with pathogenic congeners.</title>
        <authorList>
            <person name="Ruby E.G."/>
            <person name="Urbanowski M."/>
            <person name="Campbell J."/>
            <person name="Dunn A."/>
            <person name="Faini M."/>
            <person name="Gunsalus R."/>
            <person name="Lostroh P."/>
            <person name="Lupp C."/>
            <person name="McCann J."/>
            <person name="Millikan D."/>
            <person name="Schaefer A."/>
            <person name="Stabb E."/>
            <person name="Stevens A."/>
            <person name="Visick K."/>
            <person name="Whistler C."/>
            <person name="Greenberg E.P."/>
        </authorList>
    </citation>
    <scope>NUCLEOTIDE SEQUENCE [LARGE SCALE GENOMIC DNA]</scope>
    <source>
        <strain>ATCC 700601 / ES114</strain>
    </source>
</reference>
<protein>
    <recommendedName>
        <fullName evidence="1">S-adenosylmethionine:tRNA ribosyltransferase-isomerase</fullName>
        <ecNumber evidence="1">2.4.99.17</ecNumber>
    </recommendedName>
    <alternativeName>
        <fullName evidence="1">Queuosine biosynthesis protein QueA</fullName>
    </alternativeName>
</protein>
<comment type="function">
    <text evidence="1">Transfers and isomerizes the ribose moiety from AdoMet to the 7-aminomethyl group of 7-deazaguanine (preQ1-tRNA) to give epoxyqueuosine (oQ-tRNA).</text>
</comment>
<comment type="catalytic activity">
    <reaction evidence="1">
        <text>7-aminomethyl-7-carbaguanosine(34) in tRNA + S-adenosyl-L-methionine = epoxyqueuosine(34) in tRNA + adenine + L-methionine + 2 H(+)</text>
        <dbReference type="Rhea" id="RHEA:32155"/>
        <dbReference type="Rhea" id="RHEA-COMP:10342"/>
        <dbReference type="Rhea" id="RHEA-COMP:18582"/>
        <dbReference type="ChEBI" id="CHEBI:15378"/>
        <dbReference type="ChEBI" id="CHEBI:16708"/>
        <dbReference type="ChEBI" id="CHEBI:57844"/>
        <dbReference type="ChEBI" id="CHEBI:59789"/>
        <dbReference type="ChEBI" id="CHEBI:82833"/>
        <dbReference type="ChEBI" id="CHEBI:194443"/>
        <dbReference type="EC" id="2.4.99.17"/>
    </reaction>
</comment>
<comment type="pathway">
    <text evidence="1">tRNA modification; tRNA-queuosine biosynthesis.</text>
</comment>
<comment type="subunit">
    <text evidence="1">Monomer.</text>
</comment>
<comment type="subcellular location">
    <subcellularLocation>
        <location evidence="1">Cytoplasm</location>
    </subcellularLocation>
</comment>
<comment type="similarity">
    <text evidence="1">Belongs to the QueA family.</text>
</comment>
<keyword id="KW-0963">Cytoplasm</keyword>
<keyword id="KW-0671">Queuosine biosynthesis</keyword>
<keyword id="KW-1185">Reference proteome</keyword>
<keyword id="KW-0949">S-adenosyl-L-methionine</keyword>
<keyword id="KW-0808">Transferase</keyword>
<accession>Q5E3D1</accession>
<proteinExistence type="inferred from homology"/>
<sequence length="350" mass="39142">MQVSDFHFELPDELIARYPQPERTASRLLQLNGNSGELNDGQFTDILDLVQAGDLLVFNNTRVIPARMFGMKASGGKLEVLVERVLDEHSVLAHVRCSKSPKPGTMLLLGENQEHEAEMVARHDTLFEIRFTSDKKVLDILDEIGHMPLPPYIDRPDEDADKERYQTVYNKKPGAVAAPTAGLHFDTEILEKMKAKGVEFAYVTLHVGAGTFQPVRVDNILEHHMHSEYAEVSQEVIDAINATKARGGRVVSVGTTSVRSLESAAQHALKQGTELAPFFDDTEIFIYPGYEFQVVDALVTNFHLPESTLIMLVSAFAGYENTMKAYEQAVNNKYRFFSYGDAMFITKKTA</sequence>
<evidence type="ECO:0000255" key="1">
    <source>
        <dbReference type="HAMAP-Rule" id="MF_00113"/>
    </source>
</evidence>